<sequence>MLKLNKINEVKKYVDEWKKEGLTIGLVPTMGCLHEGHKSLIDRAVKENDKVIVSVFVNPTQFGPNEDFDKYPRSIENDVDLCNKAGVSIVFNPDPKEMYFHDACTYVNVENLTDGLCGAKREGHFRGVCTVVSKLFNISQATRAYFGQKDAQQLAVIKRMVRDLNFNVEIVGCPIVRESDGLAKSSRNKYLSKEERVEALVLSRGLRKGKELLYGGIRKTSKIKETIENEIKKSHLGKIDYIEVVDSITLEPVENIERDVLVAIAVFIGKTRLIDNFIFKLGE</sequence>
<organism>
    <name type="scientific">Clostridium novyi (strain NT)</name>
    <dbReference type="NCBI Taxonomy" id="386415"/>
    <lineage>
        <taxon>Bacteria</taxon>
        <taxon>Bacillati</taxon>
        <taxon>Bacillota</taxon>
        <taxon>Clostridia</taxon>
        <taxon>Eubacteriales</taxon>
        <taxon>Clostridiaceae</taxon>
        <taxon>Clostridium</taxon>
    </lineage>
</organism>
<keyword id="KW-0067">ATP-binding</keyword>
<keyword id="KW-0963">Cytoplasm</keyword>
<keyword id="KW-0436">Ligase</keyword>
<keyword id="KW-0547">Nucleotide-binding</keyword>
<keyword id="KW-0566">Pantothenate biosynthesis</keyword>
<keyword id="KW-1185">Reference proteome</keyword>
<name>PANC_CLONN</name>
<proteinExistence type="inferred from homology"/>
<protein>
    <recommendedName>
        <fullName evidence="1">Pantothenate synthetase</fullName>
        <shortName evidence="1">PS</shortName>
        <ecNumber evidence="1">6.3.2.1</ecNumber>
    </recommendedName>
    <alternativeName>
        <fullName evidence="1">Pantoate--beta-alanine ligase</fullName>
    </alternativeName>
    <alternativeName>
        <fullName evidence="1">Pantoate-activating enzyme</fullName>
    </alternativeName>
</protein>
<feature type="chain" id="PRO_0000305427" description="Pantothenate synthetase">
    <location>
        <begin position="1"/>
        <end position="283"/>
    </location>
</feature>
<feature type="active site" description="Proton donor" evidence="1">
    <location>
        <position position="37"/>
    </location>
</feature>
<feature type="binding site" evidence="1">
    <location>
        <begin position="30"/>
        <end position="37"/>
    </location>
    <ligand>
        <name>ATP</name>
        <dbReference type="ChEBI" id="CHEBI:30616"/>
    </ligand>
</feature>
<feature type="binding site" evidence="1">
    <location>
        <position position="61"/>
    </location>
    <ligand>
        <name>(R)-pantoate</name>
        <dbReference type="ChEBI" id="CHEBI:15980"/>
    </ligand>
</feature>
<feature type="binding site" evidence="1">
    <location>
        <position position="61"/>
    </location>
    <ligand>
        <name>beta-alanine</name>
        <dbReference type="ChEBI" id="CHEBI:57966"/>
    </ligand>
</feature>
<feature type="binding site" evidence="1">
    <location>
        <begin position="147"/>
        <end position="150"/>
    </location>
    <ligand>
        <name>ATP</name>
        <dbReference type="ChEBI" id="CHEBI:30616"/>
    </ligand>
</feature>
<feature type="binding site" evidence="1">
    <location>
        <position position="153"/>
    </location>
    <ligand>
        <name>(R)-pantoate</name>
        <dbReference type="ChEBI" id="CHEBI:15980"/>
    </ligand>
</feature>
<feature type="binding site" evidence="1">
    <location>
        <position position="176"/>
    </location>
    <ligand>
        <name>ATP</name>
        <dbReference type="ChEBI" id="CHEBI:30616"/>
    </ligand>
</feature>
<feature type="binding site" evidence="1">
    <location>
        <begin position="184"/>
        <end position="187"/>
    </location>
    <ligand>
        <name>ATP</name>
        <dbReference type="ChEBI" id="CHEBI:30616"/>
    </ligand>
</feature>
<evidence type="ECO:0000255" key="1">
    <source>
        <dbReference type="HAMAP-Rule" id="MF_00158"/>
    </source>
</evidence>
<reference key="1">
    <citation type="journal article" date="2006" name="Nat. Biotechnol.">
        <title>The genome and transcriptomes of the anti-tumor agent Clostridium novyi-NT.</title>
        <authorList>
            <person name="Bettegowda C."/>
            <person name="Huang X."/>
            <person name="Lin J."/>
            <person name="Cheong I."/>
            <person name="Kohli M."/>
            <person name="Szabo S.A."/>
            <person name="Zhang X."/>
            <person name="Diaz L.A. Jr."/>
            <person name="Velculescu V.E."/>
            <person name="Parmigiani G."/>
            <person name="Kinzler K.W."/>
            <person name="Vogelstein B."/>
            <person name="Zhou S."/>
        </authorList>
    </citation>
    <scope>NUCLEOTIDE SEQUENCE [LARGE SCALE GENOMIC DNA]</scope>
    <source>
        <strain>NT</strain>
    </source>
</reference>
<gene>
    <name evidence="1" type="primary">panC</name>
    <name type="ordered locus">NT01CX_1072</name>
</gene>
<dbReference type="EC" id="6.3.2.1" evidence="1"/>
<dbReference type="EMBL" id="CP000382">
    <property type="protein sequence ID" value="ABK61843.1"/>
    <property type="molecule type" value="Genomic_DNA"/>
</dbReference>
<dbReference type="RefSeq" id="WP_011721176.1">
    <property type="nucleotide sequence ID" value="NC_008593.1"/>
</dbReference>
<dbReference type="SMR" id="A0PXQ4"/>
<dbReference type="STRING" id="386415.NT01CX_1072"/>
<dbReference type="KEGG" id="cno:NT01CX_1072"/>
<dbReference type="eggNOG" id="COG0414">
    <property type="taxonomic scope" value="Bacteria"/>
</dbReference>
<dbReference type="HOGENOM" id="CLU_047148_0_0_9"/>
<dbReference type="UniPathway" id="UPA00028">
    <property type="reaction ID" value="UER00005"/>
</dbReference>
<dbReference type="Proteomes" id="UP000008220">
    <property type="component" value="Chromosome"/>
</dbReference>
<dbReference type="GO" id="GO:0005829">
    <property type="term" value="C:cytosol"/>
    <property type="evidence" value="ECO:0007669"/>
    <property type="project" value="TreeGrafter"/>
</dbReference>
<dbReference type="GO" id="GO:0005524">
    <property type="term" value="F:ATP binding"/>
    <property type="evidence" value="ECO:0007669"/>
    <property type="project" value="UniProtKB-KW"/>
</dbReference>
<dbReference type="GO" id="GO:0004592">
    <property type="term" value="F:pantoate-beta-alanine ligase activity"/>
    <property type="evidence" value="ECO:0007669"/>
    <property type="project" value="UniProtKB-UniRule"/>
</dbReference>
<dbReference type="GO" id="GO:0015940">
    <property type="term" value="P:pantothenate biosynthetic process"/>
    <property type="evidence" value="ECO:0007669"/>
    <property type="project" value="UniProtKB-UniRule"/>
</dbReference>
<dbReference type="CDD" id="cd00560">
    <property type="entry name" value="PanC"/>
    <property type="match status" value="1"/>
</dbReference>
<dbReference type="FunFam" id="3.30.1300.10:FF:000001">
    <property type="entry name" value="Pantothenate synthetase"/>
    <property type="match status" value="1"/>
</dbReference>
<dbReference type="FunFam" id="3.40.50.620:FF:000013">
    <property type="entry name" value="Pantothenate synthetase"/>
    <property type="match status" value="1"/>
</dbReference>
<dbReference type="Gene3D" id="3.40.50.620">
    <property type="entry name" value="HUPs"/>
    <property type="match status" value="1"/>
</dbReference>
<dbReference type="Gene3D" id="3.30.1300.10">
    <property type="entry name" value="Pantoate-beta-alanine ligase, C-terminal domain"/>
    <property type="match status" value="1"/>
</dbReference>
<dbReference type="HAMAP" id="MF_00158">
    <property type="entry name" value="PanC"/>
    <property type="match status" value="1"/>
</dbReference>
<dbReference type="InterPro" id="IPR004821">
    <property type="entry name" value="Cyt_trans-like"/>
</dbReference>
<dbReference type="InterPro" id="IPR003721">
    <property type="entry name" value="Pantoate_ligase"/>
</dbReference>
<dbReference type="InterPro" id="IPR042176">
    <property type="entry name" value="Pantoate_ligase_C"/>
</dbReference>
<dbReference type="InterPro" id="IPR014729">
    <property type="entry name" value="Rossmann-like_a/b/a_fold"/>
</dbReference>
<dbReference type="NCBIfam" id="TIGR00125">
    <property type="entry name" value="cyt_tran_rel"/>
    <property type="match status" value="1"/>
</dbReference>
<dbReference type="NCBIfam" id="TIGR00018">
    <property type="entry name" value="panC"/>
    <property type="match status" value="1"/>
</dbReference>
<dbReference type="PANTHER" id="PTHR21299">
    <property type="entry name" value="CYTIDYLATE KINASE/PANTOATE-BETA-ALANINE LIGASE"/>
    <property type="match status" value="1"/>
</dbReference>
<dbReference type="PANTHER" id="PTHR21299:SF1">
    <property type="entry name" value="PANTOATE--BETA-ALANINE LIGASE"/>
    <property type="match status" value="1"/>
</dbReference>
<dbReference type="Pfam" id="PF02569">
    <property type="entry name" value="Pantoate_ligase"/>
    <property type="match status" value="1"/>
</dbReference>
<dbReference type="SUPFAM" id="SSF52374">
    <property type="entry name" value="Nucleotidylyl transferase"/>
    <property type="match status" value="1"/>
</dbReference>
<accession>A0PXQ4</accession>
<comment type="function">
    <text evidence="1">Catalyzes the condensation of pantoate with beta-alanine in an ATP-dependent reaction via a pantoyl-adenylate intermediate.</text>
</comment>
<comment type="catalytic activity">
    <reaction evidence="1">
        <text>(R)-pantoate + beta-alanine + ATP = (R)-pantothenate + AMP + diphosphate + H(+)</text>
        <dbReference type="Rhea" id="RHEA:10912"/>
        <dbReference type="ChEBI" id="CHEBI:15378"/>
        <dbReference type="ChEBI" id="CHEBI:15980"/>
        <dbReference type="ChEBI" id="CHEBI:29032"/>
        <dbReference type="ChEBI" id="CHEBI:30616"/>
        <dbReference type="ChEBI" id="CHEBI:33019"/>
        <dbReference type="ChEBI" id="CHEBI:57966"/>
        <dbReference type="ChEBI" id="CHEBI:456215"/>
        <dbReference type="EC" id="6.3.2.1"/>
    </reaction>
</comment>
<comment type="pathway">
    <text evidence="1">Cofactor biosynthesis; (R)-pantothenate biosynthesis; (R)-pantothenate from (R)-pantoate and beta-alanine: step 1/1.</text>
</comment>
<comment type="subunit">
    <text evidence="1">Homodimer.</text>
</comment>
<comment type="subcellular location">
    <subcellularLocation>
        <location evidence="1">Cytoplasm</location>
    </subcellularLocation>
</comment>
<comment type="miscellaneous">
    <text evidence="1">The reaction proceeds by a bi uni uni bi ping pong mechanism.</text>
</comment>
<comment type="similarity">
    <text evidence="1">Belongs to the pantothenate synthetase family.</text>
</comment>